<dbReference type="EC" id="2.7.4.3" evidence="1"/>
<dbReference type="EMBL" id="CP000260">
    <property type="protein sequence ID" value="ABF33133.1"/>
    <property type="molecule type" value="Genomic_DNA"/>
</dbReference>
<dbReference type="SMR" id="Q1JJ40"/>
<dbReference type="KEGG" id="sph:MGAS10270_Spy0068"/>
<dbReference type="HOGENOM" id="CLU_032354_1_2_9"/>
<dbReference type="UniPathway" id="UPA00588">
    <property type="reaction ID" value="UER00649"/>
</dbReference>
<dbReference type="Proteomes" id="UP000002436">
    <property type="component" value="Chromosome"/>
</dbReference>
<dbReference type="GO" id="GO:0005737">
    <property type="term" value="C:cytoplasm"/>
    <property type="evidence" value="ECO:0007669"/>
    <property type="project" value="UniProtKB-SubCell"/>
</dbReference>
<dbReference type="GO" id="GO:0004017">
    <property type="term" value="F:adenylate kinase activity"/>
    <property type="evidence" value="ECO:0007669"/>
    <property type="project" value="UniProtKB-UniRule"/>
</dbReference>
<dbReference type="GO" id="GO:0005524">
    <property type="term" value="F:ATP binding"/>
    <property type="evidence" value="ECO:0007669"/>
    <property type="project" value="UniProtKB-UniRule"/>
</dbReference>
<dbReference type="GO" id="GO:0044209">
    <property type="term" value="P:AMP salvage"/>
    <property type="evidence" value="ECO:0007669"/>
    <property type="project" value="UniProtKB-UniRule"/>
</dbReference>
<dbReference type="CDD" id="cd01428">
    <property type="entry name" value="ADK"/>
    <property type="match status" value="1"/>
</dbReference>
<dbReference type="FunFam" id="3.40.50.300:FF:000106">
    <property type="entry name" value="Adenylate kinase mitochondrial"/>
    <property type="match status" value="1"/>
</dbReference>
<dbReference type="Gene3D" id="3.40.50.300">
    <property type="entry name" value="P-loop containing nucleotide triphosphate hydrolases"/>
    <property type="match status" value="1"/>
</dbReference>
<dbReference type="HAMAP" id="MF_00235">
    <property type="entry name" value="Adenylate_kinase_Adk"/>
    <property type="match status" value="1"/>
</dbReference>
<dbReference type="InterPro" id="IPR006259">
    <property type="entry name" value="Adenyl_kin_sub"/>
</dbReference>
<dbReference type="InterPro" id="IPR000850">
    <property type="entry name" value="Adenylat/UMP-CMP_kin"/>
</dbReference>
<dbReference type="InterPro" id="IPR033690">
    <property type="entry name" value="Adenylat_kinase_CS"/>
</dbReference>
<dbReference type="InterPro" id="IPR027417">
    <property type="entry name" value="P-loop_NTPase"/>
</dbReference>
<dbReference type="NCBIfam" id="TIGR01351">
    <property type="entry name" value="adk"/>
    <property type="match status" value="1"/>
</dbReference>
<dbReference type="NCBIfam" id="NF001380">
    <property type="entry name" value="PRK00279.1-2"/>
    <property type="match status" value="1"/>
</dbReference>
<dbReference type="NCBIfam" id="NF001381">
    <property type="entry name" value="PRK00279.1-3"/>
    <property type="match status" value="1"/>
</dbReference>
<dbReference type="NCBIfam" id="NF001382">
    <property type="entry name" value="PRK00279.1-4"/>
    <property type="match status" value="1"/>
</dbReference>
<dbReference type="NCBIfam" id="NF011100">
    <property type="entry name" value="PRK14527.1"/>
    <property type="match status" value="1"/>
</dbReference>
<dbReference type="PANTHER" id="PTHR23359">
    <property type="entry name" value="NUCLEOTIDE KINASE"/>
    <property type="match status" value="1"/>
</dbReference>
<dbReference type="Pfam" id="PF00406">
    <property type="entry name" value="ADK"/>
    <property type="match status" value="1"/>
</dbReference>
<dbReference type="PRINTS" id="PR00094">
    <property type="entry name" value="ADENYLTKNASE"/>
</dbReference>
<dbReference type="SUPFAM" id="SSF52540">
    <property type="entry name" value="P-loop containing nucleoside triphosphate hydrolases"/>
    <property type="match status" value="1"/>
</dbReference>
<dbReference type="PROSITE" id="PS00113">
    <property type="entry name" value="ADENYLATE_KINASE"/>
    <property type="match status" value="1"/>
</dbReference>
<sequence length="212" mass="23668">MNLLIIGLPGAGKGTQAAKIVEEFGVAHISTGDMFRAAMANQTEMGRLAKSYIDKGELVPDEVTNGIVKERLAEDDIAEKGFLLDGYPRTIEQAHALDATLEELGLRLDGVINIKVDPSCLVERLSGRIINRKTGETFHKVFNPPVDYKEEDYYQREDDKPETVKRRLDVNMAQGEPILEHYRKLGLVTDIEGNQEITDVFADVEKALLELK</sequence>
<reference key="1">
    <citation type="journal article" date="2006" name="Proc. Natl. Acad. Sci. U.S.A.">
        <title>Molecular genetic anatomy of inter- and intraserotype variation in the human bacterial pathogen group A Streptococcus.</title>
        <authorList>
            <person name="Beres S.B."/>
            <person name="Richter E.W."/>
            <person name="Nagiec M.J."/>
            <person name="Sumby P."/>
            <person name="Porcella S.F."/>
            <person name="DeLeo F.R."/>
            <person name="Musser J.M."/>
        </authorList>
    </citation>
    <scope>NUCLEOTIDE SEQUENCE [LARGE SCALE GENOMIC DNA]</scope>
    <source>
        <strain>MGAS10270</strain>
    </source>
</reference>
<protein>
    <recommendedName>
        <fullName evidence="1">Adenylate kinase</fullName>
        <shortName evidence="1">AK</shortName>
        <ecNumber evidence="1">2.7.4.3</ecNumber>
    </recommendedName>
    <alternativeName>
        <fullName evidence="1">ATP-AMP transphosphorylase</fullName>
    </alternativeName>
    <alternativeName>
        <fullName evidence="1">ATP:AMP phosphotransferase</fullName>
    </alternativeName>
    <alternativeName>
        <fullName evidence="1">Adenylate monophosphate kinase</fullName>
    </alternativeName>
</protein>
<gene>
    <name evidence="1" type="primary">adk</name>
    <name type="ordered locus">MGAS10270_Spy0068</name>
</gene>
<proteinExistence type="inferred from homology"/>
<accession>Q1JJ40</accession>
<organism>
    <name type="scientific">Streptococcus pyogenes serotype M2 (strain MGAS10270)</name>
    <dbReference type="NCBI Taxonomy" id="370552"/>
    <lineage>
        <taxon>Bacteria</taxon>
        <taxon>Bacillati</taxon>
        <taxon>Bacillota</taxon>
        <taxon>Bacilli</taxon>
        <taxon>Lactobacillales</taxon>
        <taxon>Streptococcaceae</taxon>
        <taxon>Streptococcus</taxon>
    </lineage>
</organism>
<name>KAD_STRPD</name>
<feature type="chain" id="PRO_1000058915" description="Adenylate kinase">
    <location>
        <begin position="1"/>
        <end position="212"/>
    </location>
</feature>
<feature type="region of interest" description="NMP" evidence="1">
    <location>
        <begin position="30"/>
        <end position="59"/>
    </location>
</feature>
<feature type="region of interest" description="LID" evidence="1">
    <location>
        <begin position="127"/>
        <end position="159"/>
    </location>
</feature>
<feature type="binding site" evidence="1">
    <location>
        <begin position="10"/>
        <end position="15"/>
    </location>
    <ligand>
        <name>ATP</name>
        <dbReference type="ChEBI" id="CHEBI:30616"/>
    </ligand>
</feature>
<feature type="binding site" evidence="1">
    <location>
        <position position="31"/>
    </location>
    <ligand>
        <name>AMP</name>
        <dbReference type="ChEBI" id="CHEBI:456215"/>
    </ligand>
</feature>
<feature type="binding site" evidence="1">
    <location>
        <position position="36"/>
    </location>
    <ligand>
        <name>AMP</name>
        <dbReference type="ChEBI" id="CHEBI:456215"/>
    </ligand>
</feature>
<feature type="binding site" evidence="1">
    <location>
        <begin position="57"/>
        <end position="59"/>
    </location>
    <ligand>
        <name>AMP</name>
        <dbReference type="ChEBI" id="CHEBI:456215"/>
    </ligand>
</feature>
<feature type="binding site" evidence="1">
    <location>
        <begin position="86"/>
        <end position="89"/>
    </location>
    <ligand>
        <name>AMP</name>
        <dbReference type="ChEBI" id="CHEBI:456215"/>
    </ligand>
</feature>
<feature type="binding site" evidence="1">
    <location>
        <position position="93"/>
    </location>
    <ligand>
        <name>AMP</name>
        <dbReference type="ChEBI" id="CHEBI:456215"/>
    </ligand>
</feature>
<feature type="binding site" evidence="1">
    <location>
        <position position="128"/>
    </location>
    <ligand>
        <name>ATP</name>
        <dbReference type="ChEBI" id="CHEBI:30616"/>
    </ligand>
</feature>
<feature type="binding site" evidence="1">
    <location>
        <begin position="137"/>
        <end position="138"/>
    </location>
    <ligand>
        <name>ATP</name>
        <dbReference type="ChEBI" id="CHEBI:30616"/>
    </ligand>
</feature>
<feature type="binding site" evidence="1">
    <location>
        <position position="156"/>
    </location>
    <ligand>
        <name>AMP</name>
        <dbReference type="ChEBI" id="CHEBI:456215"/>
    </ligand>
</feature>
<feature type="binding site" evidence="1">
    <location>
        <position position="167"/>
    </location>
    <ligand>
        <name>AMP</name>
        <dbReference type="ChEBI" id="CHEBI:456215"/>
    </ligand>
</feature>
<feature type="binding site" evidence="1">
    <location>
        <position position="195"/>
    </location>
    <ligand>
        <name>ATP</name>
        <dbReference type="ChEBI" id="CHEBI:30616"/>
    </ligand>
</feature>
<evidence type="ECO:0000255" key="1">
    <source>
        <dbReference type="HAMAP-Rule" id="MF_00235"/>
    </source>
</evidence>
<comment type="function">
    <text evidence="1">Catalyzes the reversible transfer of the terminal phosphate group between ATP and AMP. Plays an important role in cellular energy homeostasis and in adenine nucleotide metabolism.</text>
</comment>
<comment type="catalytic activity">
    <reaction evidence="1">
        <text>AMP + ATP = 2 ADP</text>
        <dbReference type="Rhea" id="RHEA:12973"/>
        <dbReference type="ChEBI" id="CHEBI:30616"/>
        <dbReference type="ChEBI" id="CHEBI:456215"/>
        <dbReference type="ChEBI" id="CHEBI:456216"/>
        <dbReference type="EC" id="2.7.4.3"/>
    </reaction>
</comment>
<comment type="pathway">
    <text evidence="1">Purine metabolism; AMP biosynthesis via salvage pathway; AMP from ADP: step 1/1.</text>
</comment>
<comment type="subunit">
    <text evidence="1">Monomer.</text>
</comment>
<comment type="subcellular location">
    <subcellularLocation>
        <location evidence="1">Cytoplasm</location>
    </subcellularLocation>
</comment>
<comment type="domain">
    <text evidence="1">Consists of three domains, a large central CORE domain and two small peripheral domains, NMPbind and LID, which undergo movements during catalysis. The LID domain closes over the site of phosphoryl transfer upon ATP binding. Assembling and dissambling the active center during each catalytic cycle provides an effective means to prevent ATP hydrolysis.</text>
</comment>
<comment type="similarity">
    <text evidence="1">Belongs to the adenylate kinase family.</text>
</comment>
<keyword id="KW-0067">ATP-binding</keyword>
<keyword id="KW-0963">Cytoplasm</keyword>
<keyword id="KW-0418">Kinase</keyword>
<keyword id="KW-0545">Nucleotide biosynthesis</keyword>
<keyword id="KW-0547">Nucleotide-binding</keyword>
<keyword id="KW-0808">Transferase</keyword>